<sequence length="583" mass="64030">MYPEESRGSGGVATVDFLEGLMTMTAPTPAPTPLYSHSTTGCYSAPLDAHGPLSDGSLQSLGSGPTSPLVFVPSSPRLSPFMHPPSHHYLETTSTPVYRSSHQPVPREDQCGTRDEAYSVGELGAGAGGFEITKNTRFCAVCSDYASGYHYGVWSCEGCKAFFKRSIQGHNDYMCPATNQCTIDKNRRKSCQACRLRKCYEVGMMKGGMRKDRGRVLRREKHGPAQRQTSQNLPTHKASPQDGRKRAMSSSSTSGPGGRSSLNNMPPDQVLLLLQGAEPPILCSRQKMSRPYTEVTIMTLLTSMADKELVHMITWAKKLPGFLQLSLHDQVLLLESSWLEVLMIGLIWRSIQCPGKLIFEEDLILDRNEGTCVEGMAEIFDMLLATVRFRVLKLKPEEFVCLKAIILLNSGAFSFCTGTMEPLHDSVAVQHMLDTITDALIFHISHFGCSAQQQSRRQAQLLLLLSHIRHMSNKGMEHLYSMKCKNKVPLYDLLLEMLDAHRIHRPVKPSQSWSQGDRDSPTASSTSSRGGGGGDDEGASSAGSSSGPQGSHESPRRENLSRAPKGPGVLQYRGSHSDCTRIP</sequence>
<accession>P50240</accession>
<feature type="chain" id="PRO_0000053632" description="Estrogen receptor">
    <location>
        <begin position="1"/>
        <end position="583"/>
    </location>
</feature>
<feature type="domain" description="NR LBD" evidence="3">
    <location>
        <begin position="266"/>
        <end position="501"/>
    </location>
</feature>
<feature type="DNA-binding region" description="Nuclear receptor" evidence="2">
    <location>
        <begin position="139"/>
        <end position="204"/>
    </location>
</feature>
<feature type="zinc finger region" description="NR C4-type" evidence="2">
    <location>
        <begin position="139"/>
        <end position="159"/>
    </location>
</feature>
<feature type="zinc finger region" description="NR C4-type" evidence="2">
    <location>
        <begin position="175"/>
        <end position="199"/>
    </location>
</feature>
<feature type="region of interest" description="Modulating" evidence="1">
    <location>
        <begin position="1"/>
        <end position="138"/>
    </location>
</feature>
<feature type="region of interest" description="Hinge">
    <location>
        <begin position="205"/>
        <end position="265"/>
    </location>
</feature>
<feature type="region of interest" description="Disordered" evidence="4">
    <location>
        <begin position="220"/>
        <end position="263"/>
    </location>
</feature>
<feature type="region of interest" description="Disordered" evidence="4">
    <location>
        <begin position="506"/>
        <end position="583"/>
    </location>
</feature>
<feature type="compositionally biased region" description="Low complexity" evidence="4">
    <location>
        <begin position="539"/>
        <end position="551"/>
    </location>
</feature>
<keyword id="KW-0238">DNA-binding</keyword>
<keyword id="KW-0446">Lipid-binding</keyword>
<keyword id="KW-0479">Metal-binding</keyword>
<keyword id="KW-0539">Nucleus</keyword>
<keyword id="KW-0675">Receptor</keyword>
<keyword id="KW-1185">Reference proteome</keyword>
<keyword id="KW-0754">Steroid-binding</keyword>
<keyword id="KW-0804">Transcription</keyword>
<keyword id="KW-0805">Transcription regulation</keyword>
<keyword id="KW-0862">Zinc</keyword>
<keyword id="KW-0863">Zinc-finger</keyword>
<name>ESR1_OREAU</name>
<proteinExistence type="inferred from homology"/>
<reference key="1">
    <citation type="journal article" date="1996" name="Mol. Cell. Endocrinol.">
        <title>Transcription regulatory signals in the 5' and 3' regions of Oreochromis aureus ER gene.</title>
        <authorList>
            <person name="Tan N.S."/>
            <person name="Lam T.J."/>
            <person name="Ding J.L."/>
        </authorList>
    </citation>
    <scope>NUCLEOTIDE SEQUENCE [GENOMIC DNA]</scope>
</reference>
<reference key="2">
    <citation type="journal article" date="1995" name="DNA Seq.">
        <title>Molecular cloning and sequencing of the hormone-binding domain of Oreochromis aureus estrogen receptor gene.</title>
        <authorList>
            <person name="Tan N.S."/>
            <person name="Lam T.J."/>
            <person name="Ding J.L."/>
        </authorList>
    </citation>
    <scope>NUCLEOTIDE SEQUENCE [GENOMIC DNA] OF 270-583</scope>
    <source>
        <tissue>Blood</tissue>
    </source>
</reference>
<gene>
    <name type="primary">esr1</name>
    <name type="synonym">esr</name>
    <name type="synonym">nr3a1</name>
</gene>
<dbReference type="EMBL" id="X93557">
    <property type="protein sequence ID" value="CAA63774.1"/>
    <property type="molecule type" value="Genomic_DNA"/>
</dbReference>
<dbReference type="EMBL" id="X93558">
    <property type="protein sequence ID" value="CAA63774.1"/>
    <property type="status" value="JOINED"/>
    <property type="molecule type" value="Genomic_DNA"/>
</dbReference>
<dbReference type="EMBL" id="X93559">
    <property type="protein sequence ID" value="CAA63774.1"/>
    <property type="status" value="JOINED"/>
    <property type="molecule type" value="Genomic_DNA"/>
</dbReference>
<dbReference type="EMBL" id="X93560">
    <property type="protein sequence ID" value="CAA63774.1"/>
    <property type="status" value="JOINED"/>
    <property type="molecule type" value="Genomic_DNA"/>
</dbReference>
<dbReference type="EMBL" id="Z46665">
    <property type="protein sequence ID" value="CAA63774.1"/>
    <property type="status" value="JOINED"/>
    <property type="molecule type" value="Genomic_DNA"/>
</dbReference>
<dbReference type="EMBL" id="Z46666">
    <property type="protein sequence ID" value="CAA63774.1"/>
    <property type="status" value="JOINED"/>
    <property type="molecule type" value="Genomic_DNA"/>
</dbReference>
<dbReference type="EMBL" id="Z46667">
    <property type="protein sequence ID" value="CAA63774.1"/>
    <property type="status" value="JOINED"/>
    <property type="molecule type" value="Genomic_DNA"/>
</dbReference>
<dbReference type="EMBL" id="Z46668">
    <property type="protein sequence ID" value="CAA63774.1"/>
    <property type="status" value="JOINED"/>
    <property type="molecule type" value="Genomic_DNA"/>
</dbReference>
<dbReference type="EMBL" id="Z46669">
    <property type="protein sequence ID" value="CAA63774.1"/>
    <property type="status" value="JOINED"/>
    <property type="molecule type" value="Genomic_DNA"/>
</dbReference>
<dbReference type="SMR" id="P50240"/>
<dbReference type="Proteomes" id="UP000472276">
    <property type="component" value="Unplaced"/>
</dbReference>
<dbReference type="GO" id="GO:0005634">
    <property type="term" value="C:nucleus"/>
    <property type="evidence" value="ECO:0000250"/>
    <property type="project" value="UniProtKB"/>
</dbReference>
<dbReference type="GO" id="GO:0042562">
    <property type="term" value="F:hormone binding"/>
    <property type="evidence" value="ECO:0007669"/>
    <property type="project" value="UniProtKB-ARBA"/>
</dbReference>
<dbReference type="GO" id="GO:0030284">
    <property type="term" value="F:nuclear estrogen receptor activity"/>
    <property type="evidence" value="ECO:0007669"/>
    <property type="project" value="InterPro"/>
</dbReference>
<dbReference type="GO" id="GO:0043565">
    <property type="term" value="F:sequence-specific DNA binding"/>
    <property type="evidence" value="ECO:0007669"/>
    <property type="project" value="InterPro"/>
</dbReference>
<dbReference type="GO" id="GO:0005496">
    <property type="term" value="F:steroid binding"/>
    <property type="evidence" value="ECO:0007669"/>
    <property type="project" value="UniProtKB-KW"/>
</dbReference>
<dbReference type="GO" id="GO:0008270">
    <property type="term" value="F:zinc ion binding"/>
    <property type="evidence" value="ECO:0007669"/>
    <property type="project" value="UniProtKB-KW"/>
</dbReference>
<dbReference type="CDD" id="cd07171">
    <property type="entry name" value="NR_DBD_ER"/>
    <property type="match status" value="1"/>
</dbReference>
<dbReference type="FunFam" id="1.10.565.10:FF:000010">
    <property type="entry name" value="Estrogen receptor"/>
    <property type="match status" value="1"/>
</dbReference>
<dbReference type="FunFam" id="3.30.50.10:FF:000014">
    <property type="entry name" value="Estrogen receptor beta"/>
    <property type="match status" value="1"/>
</dbReference>
<dbReference type="Gene3D" id="3.30.50.10">
    <property type="entry name" value="Erythroid Transcription Factor GATA-1, subunit A"/>
    <property type="match status" value="1"/>
</dbReference>
<dbReference type="Gene3D" id="1.10.565.10">
    <property type="entry name" value="Retinoid X Receptor"/>
    <property type="match status" value="1"/>
</dbReference>
<dbReference type="InterPro" id="IPR024178">
    <property type="entry name" value="Est_rcpt/est-rel_rcp"/>
</dbReference>
<dbReference type="InterPro" id="IPR001292">
    <property type="entry name" value="Estr_rcpt"/>
</dbReference>
<dbReference type="InterPro" id="IPR046944">
    <property type="entry name" value="Estr_rcpt_N"/>
</dbReference>
<dbReference type="InterPro" id="IPR035500">
    <property type="entry name" value="NHR-like_dom_sf"/>
</dbReference>
<dbReference type="InterPro" id="IPR000536">
    <property type="entry name" value="Nucl_hrmn_rcpt_lig-bd"/>
</dbReference>
<dbReference type="InterPro" id="IPR050200">
    <property type="entry name" value="Nuclear_hormone_rcpt_NR3"/>
</dbReference>
<dbReference type="InterPro" id="IPR001723">
    <property type="entry name" value="Nuclear_hrmn_rcpt"/>
</dbReference>
<dbReference type="InterPro" id="IPR001628">
    <property type="entry name" value="Znf_hrmn_rcpt"/>
</dbReference>
<dbReference type="InterPro" id="IPR013088">
    <property type="entry name" value="Znf_NHR/GATA"/>
</dbReference>
<dbReference type="PANTHER" id="PTHR48092">
    <property type="entry name" value="KNIRPS-RELATED PROTEIN-RELATED"/>
    <property type="match status" value="1"/>
</dbReference>
<dbReference type="Pfam" id="PF00104">
    <property type="entry name" value="Hormone_recep"/>
    <property type="match status" value="1"/>
</dbReference>
<dbReference type="Pfam" id="PF02159">
    <property type="entry name" value="Oest_recep"/>
    <property type="match status" value="1"/>
</dbReference>
<dbReference type="Pfam" id="PF00105">
    <property type="entry name" value="zf-C4"/>
    <property type="match status" value="1"/>
</dbReference>
<dbReference type="PIRSF" id="PIRSF500101">
    <property type="entry name" value="ER-a"/>
    <property type="match status" value="1"/>
</dbReference>
<dbReference type="PIRSF" id="PIRSF002527">
    <property type="entry name" value="ER-like_NR"/>
    <property type="match status" value="1"/>
</dbReference>
<dbReference type="PRINTS" id="PR00398">
    <property type="entry name" value="STRDHORMONER"/>
</dbReference>
<dbReference type="PRINTS" id="PR00047">
    <property type="entry name" value="STROIDFINGER"/>
</dbReference>
<dbReference type="SMART" id="SM00430">
    <property type="entry name" value="HOLI"/>
    <property type="match status" value="1"/>
</dbReference>
<dbReference type="SMART" id="SM00399">
    <property type="entry name" value="ZnF_C4"/>
    <property type="match status" value="1"/>
</dbReference>
<dbReference type="SUPFAM" id="SSF57716">
    <property type="entry name" value="Glucocorticoid receptor-like (DNA-binding domain)"/>
    <property type="match status" value="1"/>
</dbReference>
<dbReference type="SUPFAM" id="SSF48508">
    <property type="entry name" value="Nuclear receptor ligand-binding domain"/>
    <property type="match status" value="1"/>
</dbReference>
<dbReference type="PROSITE" id="PS51843">
    <property type="entry name" value="NR_LBD"/>
    <property type="match status" value="1"/>
</dbReference>
<dbReference type="PROSITE" id="PS00031">
    <property type="entry name" value="NUCLEAR_REC_DBD_1"/>
    <property type="match status" value="1"/>
</dbReference>
<dbReference type="PROSITE" id="PS51030">
    <property type="entry name" value="NUCLEAR_REC_DBD_2"/>
    <property type="match status" value="1"/>
</dbReference>
<comment type="function">
    <text>The steroid hormones and their receptors are involved in the regulation of eukaryotic gene expression and affect cellular proliferation and differentiation in target tissues.</text>
</comment>
<comment type="subunit">
    <text evidence="1">Binds DNA as a homodimer. Can form a heterodimer with ER-beta (By similarity).</text>
</comment>
<comment type="subcellular location">
    <subcellularLocation>
        <location>Nucleus</location>
    </subcellularLocation>
</comment>
<comment type="domain">
    <text>Composed of three domains: a modulating N-terminal domain, a DNA-binding domain and a C-terminal ligand-binding domain.</text>
</comment>
<comment type="similarity">
    <text evidence="5">Belongs to the nuclear hormone receptor family. NR3 subfamily.</text>
</comment>
<organism>
    <name type="scientific">Oreochromis aureus</name>
    <name type="common">Israeli tilapia</name>
    <name type="synonym">Chromis aureus</name>
    <dbReference type="NCBI Taxonomy" id="47969"/>
    <lineage>
        <taxon>Eukaryota</taxon>
        <taxon>Metazoa</taxon>
        <taxon>Chordata</taxon>
        <taxon>Craniata</taxon>
        <taxon>Vertebrata</taxon>
        <taxon>Euteleostomi</taxon>
        <taxon>Actinopterygii</taxon>
        <taxon>Neopterygii</taxon>
        <taxon>Teleostei</taxon>
        <taxon>Neoteleostei</taxon>
        <taxon>Acanthomorphata</taxon>
        <taxon>Ovalentaria</taxon>
        <taxon>Cichlomorphae</taxon>
        <taxon>Cichliformes</taxon>
        <taxon>Cichlidae</taxon>
        <taxon>African cichlids</taxon>
        <taxon>Pseudocrenilabrinae</taxon>
        <taxon>Oreochromini</taxon>
        <taxon>Oreochromis</taxon>
    </lineage>
</organism>
<protein>
    <recommendedName>
        <fullName>Estrogen receptor</fullName>
        <shortName>ER</shortName>
    </recommendedName>
    <alternativeName>
        <fullName>ER-alpha</fullName>
    </alternativeName>
    <alternativeName>
        <fullName>Estradiol receptor</fullName>
    </alternativeName>
    <alternativeName>
        <fullName>Nuclear receptor subfamily 3 group A member 1</fullName>
    </alternativeName>
</protein>
<evidence type="ECO:0000250" key="1"/>
<evidence type="ECO:0000255" key="2">
    <source>
        <dbReference type="PROSITE-ProRule" id="PRU00407"/>
    </source>
</evidence>
<evidence type="ECO:0000255" key="3">
    <source>
        <dbReference type="PROSITE-ProRule" id="PRU01189"/>
    </source>
</evidence>
<evidence type="ECO:0000256" key="4">
    <source>
        <dbReference type="SAM" id="MobiDB-lite"/>
    </source>
</evidence>
<evidence type="ECO:0000305" key="5"/>